<dbReference type="EC" id="1.2.1.38" evidence="1"/>
<dbReference type="EMBL" id="AE017340">
    <property type="protein sequence ID" value="AAV81453.1"/>
    <property type="molecule type" value="Genomic_DNA"/>
</dbReference>
<dbReference type="RefSeq" id="WP_011233868.1">
    <property type="nucleotide sequence ID" value="NC_006512.1"/>
</dbReference>
<dbReference type="SMR" id="Q5QX02"/>
<dbReference type="STRING" id="283942.IL0612"/>
<dbReference type="GeneID" id="41335763"/>
<dbReference type="KEGG" id="ilo:IL0612"/>
<dbReference type="eggNOG" id="COG0002">
    <property type="taxonomic scope" value="Bacteria"/>
</dbReference>
<dbReference type="HOGENOM" id="CLU_006384_0_1_6"/>
<dbReference type="OrthoDB" id="9801289at2"/>
<dbReference type="UniPathway" id="UPA00068">
    <property type="reaction ID" value="UER00108"/>
</dbReference>
<dbReference type="Proteomes" id="UP000001171">
    <property type="component" value="Chromosome"/>
</dbReference>
<dbReference type="GO" id="GO:0005737">
    <property type="term" value="C:cytoplasm"/>
    <property type="evidence" value="ECO:0007669"/>
    <property type="project" value="UniProtKB-SubCell"/>
</dbReference>
<dbReference type="GO" id="GO:0003942">
    <property type="term" value="F:N-acetyl-gamma-glutamyl-phosphate reductase activity"/>
    <property type="evidence" value="ECO:0007669"/>
    <property type="project" value="UniProtKB-UniRule"/>
</dbReference>
<dbReference type="GO" id="GO:0051287">
    <property type="term" value="F:NAD binding"/>
    <property type="evidence" value="ECO:0007669"/>
    <property type="project" value="InterPro"/>
</dbReference>
<dbReference type="GO" id="GO:0070401">
    <property type="term" value="F:NADP+ binding"/>
    <property type="evidence" value="ECO:0007669"/>
    <property type="project" value="InterPro"/>
</dbReference>
<dbReference type="GO" id="GO:0006526">
    <property type="term" value="P:L-arginine biosynthetic process"/>
    <property type="evidence" value="ECO:0007669"/>
    <property type="project" value="UniProtKB-UniRule"/>
</dbReference>
<dbReference type="CDD" id="cd23934">
    <property type="entry name" value="AGPR_1_C"/>
    <property type="match status" value="1"/>
</dbReference>
<dbReference type="CDD" id="cd17895">
    <property type="entry name" value="AGPR_1_N"/>
    <property type="match status" value="1"/>
</dbReference>
<dbReference type="FunFam" id="3.30.360.10:FF:000014">
    <property type="entry name" value="N-acetyl-gamma-glutamyl-phosphate reductase"/>
    <property type="match status" value="1"/>
</dbReference>
<dbReference type="Gene3D" id="3.30.360.10">
    <property type="entry name" value="Dihydrodipicolinate Reductase, domain 2"/>
    <property type="match status" value="1"/>
</dbReference>
<dbReference type="Gene3D" id="3.40.50.720">
    <property type="entry name" value="NAD(P)-binding Rossmann-like Domain"/>
    <property type="match status" value="1"/>
</dbReference>
<dbReference type="HAMAP" id="MF_00150">
    <property type="entry name" value="ArgC_type1"/>
    <property type="match status" value="1"/>
</dbReference>
<dbReference type="InterPro" id="IPR023013">
    <property type="entry name" value="AGPR_AS"/>
</dbReference>
<dbReference type="InterPro" id="IPR000706">
    <property type="entry name" value="AGPR_type-1"/>
</dbReference>
<dbReference type="InterPro" id="IPR036291">
    <property type="entry name" value="NAD(P)-bd_dom_sf"/>
</dbReference>
<dbReference type="InterPro" id="IPR050085">
    <property type="entry name" value="NAGSA_dehydrogenase"/>
</dbReference>
<dbReference type="InterPro" id="IPR000534">
    <property type="entry name" value="Semialdehyde_DH_NAD-bd"/>
</dbReference>
<dbReference type="NCBIfam" id="TIGR01850">
    <property type="entry name" value="argC"/>
    <property type="match status" value="1"/>
</dbReference>
<dbReference type="PANTHER" id="PTHR32338:SF10">
    <property type="entry name" value="N-ACETYL-GAMMA-GLUTAMYL-PHOSPHATE REDUCTASE, CHLOROPLASTIC-RELATED"/>
    <property type="match status" value="1"/>
</dbReference>
<dbReference type="PANTHER" id="PTHR32338">
    <property type="entry name" value="N-ACETYL-GAMMA-GLUTAMYL-PHOSPHATE REDUCTASE, CHLOROPLASTIC-RELATED-RELATED"/>
    <property type="match status" value="1"/>
</dbReference>
<dbReference type="Pfam" id="PF01118">
    <property type="entry name" value="Semialdhyde_dh"/>
    <property type="match status" value="1"/>
</dbReference>
<dbReference type="Pfam" id="PF22698">
    <property type="entry name" value="Semialdhyde_dhC_1"/>
    <property type="match status" value="1"/>
</dbReference>
<dbReference type="SMART" id="SM00859">
    <property type="entry name" value="Semialdhyde_dh"/>
    <property type="match status" value="1"/>
</dbReference>
<dbReference type="SUPFAM" id="SSF55347">
    <property type="entry name" value="Glyceraldehyde-3-phosphate dehydrogenase-like, C-terminal domain"/>
    <property type="match status" value="1"/>
</dbReference>
<dbReference type="SUPFAM" id="SSF51735">
    <property type="entry name" value="NAD(P)-binding Rossmann-fold domains"/>
    <property type="match status" value="1"/>
</dbReference>
<dbReference type="PROSITE" id="PS01224">
    <property type="entry name" value="ARGC"/>
    <property type="match status" value="1"/>
</dbReference>
<protein>
    <recommendedName>
        <fullName evidence="1">N-acetyl-gamma-glutamyl-phosphate reductase</fullName>
        <shortName evidence="1">AGPR</shortName>
        <ecNumber evidence="1">1.2.1.38</ecNumber>
    </recommendedName>
    <alternativeName>
        <fullName evidence="1">N-acetyl-glutamate semialdehyde dehydrogenase</fullName>
        <shortName evidence="1">NAGSA dehydrogenase</shortName>
    </alternativeName>
</protein>
<gene>
    <name evidence="1" type="primary">argC</name>
    <name type="ordered locus">IL0612</name>
</gene>
<organism>
    <name type="scientific">Idiomarina loihiensis (strain ATCC BAA-735 / DSM 15497 / L2-TR)</name>
    <dbReference type="NCBI Taxonomy" id="283942"/>
    <lineage>
        <taxon>Bacteria</taxon>
        <taxon>Pseudomonadati</taxon>
        <taxon>Pseudomonadota</taxon>
        <taxon>Gammaproteobacteria</taxon>
        <taxon>Alteromonadales</taxon>
        <taxon>Idiomarinaceae</taxon>
        <taxon>Idiomarina</taxon>
    </lineage>
</organism>
<proteinExistence type="inferred from homology"/>
<name>ARGC_IDILO</name>
<keyword id="KW-0028">Amino-acid biosynthesis</keyword>
<keyword id="KW-0055">Arginine biosynthesis</keyword>
<keyword id="KW-0963">Cytoplasm</keyword>
<keyword id="KW-0521">NADP</keyword>
<keyword id="KW-0560">Oxidoreductase</keyword>
<keyword id="KW-1185">Reference proteome</keyword>
<accession>Q5QX02</accession>
<feature type="chain" id="PRO_0000112410" description="N-acetyl-gamma-glutamyl-phosphate reductase">
    <location>
        <begin position="1"/>
        <end position="341"/>
    </location>
</feature>
<feature type="active site" evidence="1">
    <location>
        <position position="163"/>
    </location>
</feature>
<evidence type="ECO:0000255" key="1">
    <source>
        <dbReference type="HAMAP-Rule" id="MF_00150"/>
    </source>
</evidence>
<sequence>MQYTAAQSQSVAIIGASGYVGVELTRLVQQHPALSLLGCYVSEHSSDAGSLLSDLHPQYAHLVKLSLQGLSSQKKELIKSSADTVFLCTDHGVSVELAPEFLAAGLKVIDLSGGFRLNATEDYPSFYGFEHQQDSWLQQAVYGLAEWYPQEIAAAQLVAVPGCYPTAALMALLPVKQAGLLSCNKIIINAVSGVTGAGRKAALTSHGAELSLQAYGLFEHRHTPEIAQQLQHEVLFTPHLAQFPRGILATVYAELNDDVSDADLDKAYQCYADQPLVRFEKQARPAIKNVVQQPFVDIGWHRQGNQLIAFSAIDNLLKGAASQAIQCVNLQLGLALEEGLL</sequence>
<comment type="function">
    <text evidence="1">Catalyzes the NADPH-dependent reduction of N-acetyl-5-glutamyl phosphate to yield N-acetyl-L-glutamate 5-semialdehyde.</text>
</comment>
<comment type="catalytic activity">
    <reaction evidence="1">
        <text>N-acetyl-L-glutamate 5-semialdehyde + phosphate + NADP(+) = N-acetyl-L-glutamyl 5-phosphate + NADPH + H(+)</text>
        <dbReference type="Rhea" id="RHEA:21588"/>
        <dbReference type="ChEBI" id="CHEBI:15378"/>
        <dbReference type="ChEBI" id="CHEBI:29123"/>
        <dbReference type="ChEBI" id="CHEBI:43474"/>
        <dbReference type="ChEBI" id="CHEBI:57783"/>
        <dbReference type="ChEBI" id="CHEBI:57936"/>
        <dbReference type="ChEBI" id="CHEBI:58349"/>
        <dbReference type="EC" id="1.2.1.38"/>
    </reaction>
</comment>
<comment type="pathway">
    <text evidence="1">Amino-acid biosynthesis; L-arginine biosynthesis; N(2)-acetyl-L-ornithine from L-glutamate: step 3/4.</text>
</comment>
<comment type="subcellular location">
    <subcellularLocation>
        <location evidence="1">Cytoplasm</location>
    </subcellularLocation>
</comment>
<comment type="similarity">
    <text evidence="1">Belongs to the NAGSA dehydrogenase family. Type 1 subfamily.</text>
</comment>
<reference key="1">
    <citation type="journal article" date="2004" name="Proc. Natl. Acad. Sci. U.S.A.">
        <title>Genome sequence of the deep-sea gamma-proteobacterium Idiomarina loihiensis reveals amino acid fermentation as a source of carbon and energy.</title>
        <authorList>
            <person name="Hou S."/>
            <person name="Saw J.H."/>
            <person name="Lee K.S."/>
            <person name="Freitas T.A."/>
            <person name="Belisle C."/>
            <person name="Kawarabayasi Y."/>
            <person name="Donachie S.P."/>
            <person name="Pikina A."/>
            <person name="Galperin M.Y."/>
            <person name="Koonin E.V."/>
            <person name="Makarova K.S."/>
            <person name="Omelchenko M.V."/>
            <person name="Sorokin A."/>
            <person name="Wolf Y.I."/>
            <person name="Li Q.X."/>
            <person name="Keum Y.S."/>
            <person name="Campbell S."/>
            <person name="Denery J."/>
            <person name="Aizawa S."/>
            <person name="Shibata S."/>
            <person name="Malahoff A."/>
            <person name="Alam M."/>
        </authorList>
    </citation>
    <scope>NUCLEOTIDE SEQUENCE [LARGE SCALE GENOMIC DNA]</scope>
    <source>
        <strain>ATCC BAA-735 / DSM 15497 / L2-TR</strain>
    </source>
</reference>